<evidence type="ECO:0000255" key="1">
    <source>
        <dbReference type="HAMAP-Rule" id="MF_00362"/>
    </source>
</evidence>
<evidence type="ECO:0000305" key="2"/>
<gene>
    <name evidence="1" type="primary">rplJ</name>
    <name type="ordered locus">BPSL3223</name>
</gene>
<organism>
    <name type="scientific">Burkholderia pseudomallei (strain K96243)</name>
    <dbReference type="NCBI Taxonomy" id="272560"/>
    <lineage>
        <taxon>Bacteria</taxon>
        <taxon>Pseudomonadati</taxon>
        <taxon>Pseudomonadota</taxon>
        <taxon>Betaproteobacteria</taxon>
        <taxon>Burkholderiales</taxon>
        <taxon>Burkholderiaceae</taxon>
        <taxon>Burkholderia</taxon>
        <taxon>pseudomallei group</taxon>
    </lineage>
</organism>
<keyword id="KW-1185">Reference proteome</keyword>
<keyword id="KW-0687">Ribonucleoprotein</keyword>
<keyword id="KW-0689">Ribosomal protein</keyword>
<keyword id="KW-0694">RNA-binding</keyword>
<keyword id="KW-0699">rRNA-binding</keyword>
<reference key="1">
    <citation type="journal article" date="2004" name="Proc. Natl. Acad. Sci. U.S.A.">
        <title>Genomic plasticity of the causative agent of melioidosis, Burkholderia pseudomallei.</title>
        <authorList>
            <person name="Holden M.T.G."/>
            <person name="Titball R.W."/>
            <person name="Peacock S.J."/>
            <person name="Cerdeno-Tarraga A.-M."/>
            <person name="Atkins T."/>
            <person name="Crossman L.C."/>
            <person name="Pitt T."/>
            <person name="Churcher C."/>
            <person name="Mungall K.L."/>
            <person name="Bentley S.D."/>
            <person name="Sebaihia M."/>
            <person name="Thomson N.R."/>
            <person name="Bason N."/>
            <person name="Beacham I.R."/>
            <person name="Brooks K."/>
            <person name="Brown K.A."/>
            <person name="Brown N.F."/>
            <person name="Challis G.L."/>
            <person name="Cherevach I."/>
            <person name="Chillingworth T."/>
            <person name="Cronin A."/>
            <person name="Crossett B."/>
            <person name="Davis P."/>
            <person name="DeShazer D."/>
            <person name="Feltwell T."/>
            <person name="Fraser A."/>
            <person name="Hance Z."/>
            <person name="Hauser H."/>
            <person name="Holroyd S."/>
            <person name="Jagels K."/>
            <person name="Keith K.E."/>
            <person name="Maddison M."/>
            <person name="Moule S."/>
            <person name="Price C."/>
            <person name="Quail M.A."/>
            <person name="Rabbinowitsch E."/>
            <person name="Rutherford K."/>
            <person name="Sanders M."/>
            <person name="Simmonds M."/>
            <person name="Songsivilai S."/>
            <person name="Stevens K."/>
            <person name="Tumapa S."/>
            <person name="Vesaratchavest M."/>
            <person name="Whitehead S."/>
            <person name="Yeats C."/>
            <person name="Barrell B.G."/>
            <person name="Oyston P.C.F."/>
            <person name="Parkhill J."/>
        </authorList>
    </citation>
    <scope>NUCLEOTIDE SEQUENCE [LARGE SCALE GENOMIC DNA]</scope>
    <source>
        <strain>K96243</strain>
    </source>
</reference>
<protein>
    <recommendedName>
        <fullName evidence="1">Large ribosomal subunit protein uL10</fullName>
    </recommendedName>
    <alternativeName>
        <fullName evidence="2">50S ribosomal protein L10</fullName>
    </alternativeName>
</protein>
<dbReference type="EMBL" id="BX571965">
    <property type="protein sequence ID" value="CAH37234.1"/>
    <property type="molecule type" value="Genomic_DNA"/>
</dbReference>
<dbReference type="RefSeq" id="WP_004199864.1">
    <property type="nucleotide sequence ID" value="NZ_CP009538.1"/>
</dbReference>
<dbReference type="RefSeq" id="YP_109817.1">
    <property type="nucleotide sequence ID" value="NC_006350.1"/>
</dbReference>
<dbReference type="SMR" id="Q63Q01"/>
<dbReference type="STRING" id="272560.BPSL3223"/>
<dbReference type="GeneID" id="93061843"/>
<dbReference type="KEGG" id="bps:BPSL3223"/>
<dbReference type="PATRIC" id="fig|272560.51.peg.2015"/>
<dbReference type="eggNOG" id="COG0244">
    <property type="taxonomic scope" value="Bacteria"/>
</dbReference>
<dbReference type="Proteomes" id="UP000000605">
    <property type="component" value="Chromosome 1"/>
</dbReference>
<dbReference type="GO" id="GO:1990904">
    <property type="term" value="C:ribonucleoprotein complex"/>
    <property type="evidence" value="ECO:0007669"/>
    <property type="project" value="UniProtKB-KW"/>
</dbReference>
<dbReference type="GO" id="GO:0005840">
    <property type="term" value="C:ribosome"/>
    <property type="evidence" value="ECO:0007669"/>
    <property type="project" value="UniProtKB-KW"/>
</dbReference>
<dbReference type="GO" id="GO:0070180">
    <property type="term" value="F:large ribosomal subunit rRNA binding"/>
    <property type="evidence" value="ECO:0007669"/>
    <property type="project" value="UniProtKB-UniRule"/>
</dbReference>
<dbReference type="GO" id="GO:0006412">
    <property type="term" value="P:translation"/>
    <property type="evidence" value="ECO:0007669"/>
    <property type="project" value="UniProtKB-UniRule"/>
</dbReference>
<dbReference type="CDD" id="cd05797">
    <property type="entry name" value="Ribosomal_L10"/>
    <property type="match status" value="1"/>
</dbReference>
<dbReference type="Gene3D" id="3.30.70.1730">
    <property type="match status" value="1"/>
</dbReference>
<dbReference type="Gene3D" id="6.10.250.290">
    <property type="match status" value="1"/>
</dbReference>
<dbReference type="HAMAP" id="MF_00362">
    <property type="entry name" value="Ribosomal_uL10"/>
    <property type="match status" value="1"/>
</dbReference>
<dbReference type="InterPro" id="IPR001790">
    <property type="entry name" value="Ribosomal_uL10"/>
</dbReference>
<dbReference type="InterPro" id="IPR043141">
    <property type="entry name" value="Ribosomal_uL10-like_sf"/>
</dbReference>
<dbReference type="InterPro" id="IPR022973">
    <property type="entry name" value="Ribosomal_uL10_bac"/>
</dbReference>
<dbReference type="InterPro" id="IPR047865">
    <property type="entry name" value="Ribosomal_uL10_bac_type"/>
</dbReference>
<dbReference type="NCBIfam" id="NF000955">
    <property type="entry name" value="PRK00099.1-1"/>
    <property type="match status" value="1"/>
</dbReference>
<dbReference type="PANTHER" id="PTHR11560">
    <property type="entry name" value="39S RIBOSOMAL PROTEIN L10, MITOCHONDRIAL"/>
    <property type="match status" value="1"/>
</dbReference>
<dbReference type="Pfam" id="PF00466">
    <property type="entry name" value="Ribosomal_L10"/>
    <property type="match status" value="1"/>
</dbReference>
<dbReference type="SUPFAM" id="SSF160369">
    <property type="entry name" value="Ribosomal protein L10-like"/>
    <property type="match status" value="1"/>
</dbReference>
<name>RL10_BURPS</name>
<proteinExistence type="inferred from homology"/>
<comment type="function">
    <text evidence="1">Forms part of the ribosomal stalk, playing a central role in the interaction of the ribosome with GTP-bound translation factors.</text>
</comment>
<comment type="subunit">
    <text evidence="1">Part of the ribosomal stalk of the 50S ribosomal subunit. The N-terminus interacts with L11 and the large rRNA to form the base of the stalk. The C-terminus forms an elongated spine to which L12 dimers bind in a sequential fashion forming a multimeric L10(L12)X complex.</text>
</comment>
<comment type="similarity">
    <text evidence="1">Belongs to the universal ribosomal protein uL10 family.</text>
</comment>
<accession>Q63Q01</accession>
<feature type="chain" id="PRO_0000154606" description="Large ribosomal subunit protein uL10">
    <location>
        <begin position="1"/>
        <end position="165"/>
    </location>
</feature>
<sequence>MPLNREDKQAVVAEVAAQVAKAQTVVLAEYRGIAVGDLTTLRAKAREQKVYLRVLKNTLARRAVEGTPFAPLAEQMTGPLIYGISEDAIAAAKVVHDFSKSNDKLVIKAGSYDGKVMDKAGVQALASIPSREELLSKLLFVMQAPVSGFARALAALAEKKQAEAA</sequence>